<feature type="chain" id="PRO_0000271983" description="Bacilliredoxin BH1716">
    <location>
        <begin position="1"/>
        <end position="144"/>
    </location>
</feature>
<sequence length="144" mass="16189">MSMHYEDYMRQVVEPMRRELTERGFKELLTPEEVEQYMESAEGTTLVVINSVCGCAAGLARPAAVTSLAHDKHPDHLVTVFAGQEKEATAKMREYLAPNPPSSPSMALFKGKELVHFIPREEIEGAEPEALIRRLAMAYNEHCE</sequence>
<organism>
    <name type="scientific">Halalkalibacterium halodurans (strain ATCC BAA-125 / DSM 18197 / FERM 7344 / JCM 9153 / C-125)</name>
    <name type="common">Bacillus halodurans</name>
    <dbReference type="NCBI Taxonomy" id="272558"/>
    <lineage>
        <taxon>Bacteria</taxon>
        <taxon>Bacillati</taxon>
        <taxon>Bacillota</taxon>
        <taxon>Bacilli</taxon>
        <taxon>Bacillales</taxon>
        <taxon>Bacillaceae</taxon>
        <taxon>Halalkalibacterium (ex Joshi et al. 2022)</taxon>
    </lineage>
</organism>
<keyword id="KW-1185">Reference proteome</keyword>
<evidence type="ECO:0000305" key="1"/>
<gene>
    <name type="ordered locus">BH1716</name>
</gene>
<protein>
    <recommendedName>
        <fullName evidence="1">Bacilliredoxin BH1716</fullName>
    </recommendedName>
</protein>
<proteinExistence type="inferred from homology"/>
<name>Y1716_HALH5</name>
<dbReference type="EMBL" id="BA000004">
    <property type="protein sequence ID" value="BAB05435.1"/>
    <property type="molecule type" value="Genomic_DNA"/>
</dbReference>
<dbReference type="PIR" id="D83864">
    <property type="entry name" value="D83864"/>
</dbReference>
<dbReference type="RefSeq" id="WP_010897877.1">
    <property type="nucleotide sequence ID" value="NC_002570.2"/>
</dbReference>
<dbReference type="SMR" id="Q9KC58"/>
<dbReference type="STRING" id="272558.gene:10727614"/>
<dbReference type="GeneID" id="87597331"/>
<dbReference type="KEGG" id="bha:BH1716"/>
<dbReference type="eggNOG" id="ENOG502ZBVN">
    <property type="taxonomic scope" value="Bacteria"/>
</dbReference>
<dbReference type="HOGENOM" id="CLU_132521_0_0_9"/>
<dbReference type="OrthoDB" id="9793981at2"/>
<dbReference type="Proteomes" id="UP000001258">
    <property type="component" value="Chromosome"/>
</dbReference>
<dbReference type="GO" id="GO:0045454">
    <property type="term" value="P:cell redox homeostasis"/>
    <property type="evidence" value="ECO:0000250"/>
    <property type="project" value="UniProtKB"/>
</dbReference>
<dbReference type="Gene3D" id="6.10.250.2150">
    <property type="match status" value="1"/>
</dbReference>
<dbReference type="Gene3D" id="3.40.30.10">
    <property type="entry name" value="Glutaredoxin"/>
    <property type="match status" value="1"/>
</dbReference>
<dbReference type="InterPro" id="IPR009474">
    <property type="entry name" value="BrxB/BrxA"/>
</dbReference>
<dbReference type="NCBIfam" id="TIGR04191">
    <property type="entry name" value="YphP_YqiW"/>
    <property type="match status" value="1"/>
</dbReference>
<dbReference type="PANTHER" id="PTHR40052:SF2">
    <property type="entry name" value="BACILLIREDOXIN BRXA"/>
    <property type="match status" value="1"/>
</dbReference>
<dbReference type="PANTHER" id="PTHR40052">
    <property type="entry name" value="UPF0403 PROTEIN YQIW-RELATED"/>
    <property type="match status" value="1"/>
</dbReference>
<dbReference type="Pfam" id="PF06491">
    <property type="entry name" value="Disulph_isomer"/>
    <property type="match status" value="1"/>
</dbReference>
<accession>Q9KC58</accession>
<comment type="similarity">
    <text evidence="1">Belongs to the bacilliredoxin family.</text>
</comment>
<reference key="1">
    <citation type="journal article" date="2000" name="Nucleic Acids Res.">
        <title>Complete genome sequence of the alkaliphilic bacterium Bacillus halodurans and genomic sequence comparison with Bacillus subtilis.</title>
        <authorList>
            <person name="Takami H."/>
            <person name="Nakasone K."/>
            <person name="Takaki Y."/>
            <person name="Maeno G."/>
            <person name="Sasaki R."/>
            <person name="Masui N."/>
            <person name="Fuji F."/>
            <person name="Hirama C."/>
            <person name="Nakamura Y."/>
            <person name="Ogasawara N."/>
            <person name="Kuhara S."/>
            <person name="Horikoshi K."/>
        </authorList>
    </citation>
    <scope>NUCLEOTIDE SEQUENCE [LARGE SCALE GENOMIC DNA]</scope>
    <source>
        <strain>ATCC BAA-125 / DSM 18197 / FERM 7344 / JCM 9153 / C-125</strain>
    </source>
</reference>